<organism>
    <name type="scientific">Carica papaya</name>
    <name type="common">Papaya</name>
    <dbReference type="NCBI Taxonomy" id="3649"/>
    <lineage>
        <taxon>Eukaryota</taxon>
        <taxon>Viridiplantae</taxon>
        <taxon>Streptophyta</taxon>
        <taxon>Embryophyta</taxon>
        <taxon>Tracheophyta</taxon>
        <taxon>Spermatophyta</taxon>
        <taxon>Magnoliopsida</taxon>
        <taxon>eudicotyledons</taxon>
        <taxon>Gunneridae</taxon>
        <taxon>Pentapetalae</taxon>
        <taxon>rosids</taxon>
        <taxon>malvids</taxon>
        <taxon>Brassicales</taxon>
        <taxon>Caricaceae</taxon>
        <taxon>Carica</taxon>
    </lineage>
</organism>
<gene>
    <name evidence="1" type="primary">ndhE</name>
</gene>
<protein>
    <recommendedName>
        <fullName evidence="1">NAD(P)H-quinone oxidoreductase subunit 4L, chloroplastic</fullName>
        <ecNumber evidence="1">7.1.1.-</ecNumber>
    </recommendedName>
    <alternativeName>
        <fullName evidence="1">NAD(P)H dehydrogenase subunit 4L</fullName>
    </alternativeName>
    <alternativeName>
        <fullName evidence="1">NADH-plastoquinone oxidoreductase subunit 4L</fullName>
    </alternativeName>
</protein>
<geneLocation type="chloroplast"/>
<accession>B1A986</accession>
<keyword id="KW-0150">Chloroplast</keyword>
<keyword id="KW-0472">Membrane</keyword>
<keyword id="KW-0520">NAD</keyword>
<keyword id="KW-0521">NADP</keyword>
<keyword id="KW-0934">Plastid</keyword>
<keyword id="KW-0618">Plastoquinone</keyword>
<keyword id="KW-0874">Quinone</keyword>
<keyword id="KW-0793">Thylakoid</keyword>
<keyword id="KW-1278">Translocase</keyword>
<keyword id="KW-0812">Transmembrane</keyword>
<keyword id="KW-1133">Transmembrane helix</keyword>
<keyword id="KW-0813">Transport</keyword>
<evidence type="ECO:0000255" key="1">
    <source>
        <dbReference type="HAMAP-Rule" id="MF_01456"/>
    </source>
</evidence>
<proteinExistence type="inferred from homology"/>
<comment type="function">
    <text evidence="1">NDH shuttles electrons from NAD(P)H:plastoquinone, via FMN and iron-sulfur (Fe-S) centers, to quinones in the photosynthetic chain and possibly in a chloroplast respiratory chain. The immediate electron acceptor for the enzyme in this species is believed to be plastoquinone. Couples the redox reaction to proton translocation, and thus conserves the redox energy in a proton gradient.</text>
</comment>
<comment type="catalytic activity">
    <reaction evidence="1">
        <text>a plastoquinone + NADH + (n+1) H(+)(in) = a plastoquinol + NAD(+) + n H(+)(out)</text>
        <dbReference type="Rhea" id="RHEA:42608"/>
        <dbReference type="Rhea" id="RHEA-COMP:9561"/>
        <dbReference type="Rhea" id="RHEA-COMP:9562"/>
        <dbReference type="ChEBI" id="CHEBI:15378"/>
        <dbReference type="ChEBI" id="CHEBI:17757"/>
        <dbReference type="ChEBI" id="CHEBI:57540"/>
        <dbReference type="ChEBI" id="CHEBI:57945"/>
        <dbReference type="ChEBI" id="CHEBI:62192"/>
    </reaction>
</comment>
<comment type="catalytic activity">
    <reaction evidence="1">
        <text>a plastoquinone + NADPH + (n+1) H(+)(in) = a plastoquinol + NADP(+) + n H(+)(out)</text>
        <dbReference type="Rhea" id="RHEA:42612"/>
        <dbReference type="Rhea" id="RHEA-COMP:9561"/>
        <dbReference type="Rhea" id="RHEA-COMP:9562"/>
        <dbReference type="ChEBI" id="CHEBI:15378"/>
        <dbReference type="ChEBI" id="CHEBI:17757"/>
        <dbReference type="ChEBI" id="CHEBI:57783"/>
        <dbReference type="ChEBI" id="CHEBI:58349"/>
        <dbReference type="ChEBI" id="CHEBI:62192"/>
    </reaction>
</comment>
<comment type="subunit">
    <text evidence="1">NDH is composed of at least 16 different subunits, 5 of which are encoded in the nucleus.</text>
</comment>
<comment type="subcellular location">
    <subcellularLocation>
        <location evidence="1">Plastid</location>
        <location evidence="1">Chloroplast thylakoid membrane</location>
        <topology evidence="1">Multi-pass membrane protein</topology>
    </subcellularLocation>
</comment>
<comment type="similarity">
    <text evidence="1">Belongs to the complex I subunit 4L family.</text>
</comment>
<name>NU4LC_CARPA</name>
<feature type="chain" id="PRO_0000360312" description="NAD(P)H-quinone oxidoreductase subunit 4L, chloroplastic">
    <location>
        <begin position="1"/>
        <end position="101"/>
    </location>
</feature>
<feature type="transmembrane region" description="Helical" evidence="1">
    <location>
        <begin position="2"/>
        <end position="22"/>
    </location>
</feature>
<feature type="transmembrane region" description="Helical" evidence="1">
    <location>
        <begin position="32"/>
        <end position="52"/>
    </location>
</feature>
<feature type="transmembrane region" description="Helical" evidence="1">
    <location>
        <begin position="61"/>
        <end position="81"/>
    </location>
</feature>
<reference key="1">
    <citation type="journal article" date="2008" name="Nature">
        <title>The draft genome of the transgenic tropical fruit tree papaya (Carica papaya Linnaeus).</title>
        <authorList>
            <person name="Ming R."/>
            <person name="Hou S."/>
            <person name="Feng Y."/>
            <person name="Yu Q."/>
            <person name="Dionne-Laporte A."/>
            <person name="Saw J.H."/>
            <person name="Senin P."/>
            <person name="Wang W."/>
            <person name="Ly B.V."/>
            <person name="Lewis K.L."/>
            <person name="Salzberg S.L."/>
            <person name="Feng L."/>
            <person name="Jones M.R."/>
            <person name="Skelton R.L."/>
            <person name="Murray J.E."/>
            <person name="Chen C."/>
            <person name="Qian W."/>
            <person name="Shen J."/>
            <person name="Du P."/>
            <person name="Eustice M."/>
            <person name="Tong E."/>
            <person name="Tang H."/>
            <person name="Lyons E."/>
            <person name="Paull R.E."/>
            <person name="Michael T.P."/>
            <person name="Wall K."/>
            <person name="Rice D.W."/>
            <person name="Albert H."/>
            <person name="Wang M.L."/>
            <person name="Zhu Y.J."/>
            <person name="Schatz M."/>
            <person name="Nagarajan N."/>
            <person name="Acob R.A."/>
            <person name="Guan P."/>
            <person name="Blas A."/>
            <person name="Wai C.M."/>
            <person name="Ackerman C.M."/>
            <person name="Ren Y."/>
            <person name="Liu C."/>
            <person name="Wang J."/>
            <person name="Wang J."/>
            <person name="Na J.K."/>
            <person name="Shakirov E.V."/>
            <person name="Haas B."/>
            <person name="Thimmapuram J."/>
            <person name="Nelson D."/>
            <person name="Wang X."/>
            <person name="Bowers J.E."/>
            <person name="Gschwend A.R."/>
            <person name="Delcher A.L."/>
            <person name="Singh R."/>
            <person name="Suzuki J.Y."/>
            <person name="Tripathi S."/>
            <person name="Neupane K."/>
            <person name="Wei H."/>
            <person name="Irikura B."/>
            <person name="Paidi M."/>
            <person name="Jiang N."/>
            <person name="Zhang W."/>
            <person name="Presting G."/>
            <person name="Windsor A."/>
            <person name="Navajas-Perez R."/>
            <person name="Torres M.J."/>
            <person name="Feltus F.A."/>
            <person name="Porter B."/>
            <person name="Li Y."/>
            <person name="Burroughs A.M."/>
            <person name="Luo M.C."/>
            <person name="Liu L."/>
            <person name="Christopher D.A."/>
            <person name="Mount S.M."/>
            <person name="Moore P.H."/>
            <person name="Sugimura T."/>
            <person name="Jiang J."/>
            <person name="Schuler M.A."/>
            <person name="Friedman V."/>
            <person name="Mitchell-Olds T."/>
            <person name="Shippen D.E."/>
            <person name="dePamphilis C.W."/>
            <person name="Palmer J.D."/>
            <person name="Freeling M."/>
            <person name="Paterson A.H."/>
            <person name="Gonsalves D."/>
            <person name="Wang L."/>
            <person name="Alam M."/>
        </authorList>
    </citation>
    <scope>NUCLEOTIDE SEQUENCE [LARGE SCALE GENOMIC DNA]</scope>
    <source>
        <strain>cv. SunUp</strain>
    </source>
</reference>
<dbReference type="EC" id="7.1.1.-" evidence="1"/>
<dbReference type="EMBL" id="EU431223">
    <property type="protein sequence ID" value="ABY86835.1"/>
    <property type="molecule type" value="Genomic_DNA"/>
</dbReference>
<dbReference type="RefSeq" id="YP_001671734.1">
    <property type="nucleotide sequence ID" value="NC_010323.1"/>
</dbReference>
<dbReference type="SMR" id="B1A986"/>
<dbReference type="GeneID" id="5878365"/>
<dbReference type="KEGG" id="cpap:5878365"/>
<dbReference type="OrthoDB" id="1925110at2759"/>
<dbReference type="GO" id="GO:0009535">
    <property type="term" value="C:chloroplast thylakoid membrane"/>
    <property type="evidence" value="ECO:0007669"/>
    <property type="project" value="UniProtKB-SubCell"/>
</dbReference>
<dbReference type="GO" id="GO:0030964">
    <property type="term" value="C:NADH dehydrogenase complex"/>
    <property type="evidence" value="ECO:0007669"/>
    <property type="project" value="TreeGrafter"/>
</dbReference>
<dbReference type="GO" id="GO:0016655">
    <property type="term" value="F:oxidoreductase activity, acting on NAD(P)H, quinone or similar compound as acceptor"/>
    <property type="evidence" value="ECO:0007669"/>
    <property type="project" value="UniProtKB-UniRule"/>
</dbReference>
<dbReference type="GO" id="GO:0048038">
    <property type="term" value="F:quinone binding"/>
    <property type="evidence" value="ECO:0007669"/>
    <property type="project" value="UniProtKB-KW"/>
</dbReference>
<dbReference type="GO" id="GO:0042773">
    <property type="term" value="P:ATP synthesis coupled electron transport"/>
    <property type="evidence" value="ECO:0007669"/>
    <property type="project" value="InterPro"/>
</dbReference>
<dbReference type="GO" id="GO:0019684">
    <property type="term" value="P:photosynthesis, light reaction"/>
    <property type="evidence" value="ECO:0007669"/>
    <property type="project" value="UniProtKB-UniRule"/>
</dbReference>
<dbReference type="FunFam" id="1.10.287.3510:FF:000001">
    <property type="entry name" value="NADH-quinone oxidoreductase subunit K"/>
    <property type="match status" value="1"/>
</dbReference>
<dbReference type="Gene3D" id="1.10.287.3510">
    <property type="match status" value="1"/>
</dbReference>
<dbReference type="HAMAP" id="MF_01456">
    <property type="entry name" value="NDH1_NuoK"/>
    <property type="match status" value="1"/>
</dbReference>
<dbReference type="InterPro" id="IPR001133">
    <property type="entry name" value="NADH_UbQ_OxRdtase_chain4L/K"/>
</dbReference>
<dbReference type="InterPro" id="IPR039428">
    <property type="entry name" value="NUOK/Mnh_C1-like"/>
</dbReference>
<dbReference type="NCBIfam" id="NF004320">
    <property type="entry name" value="PRK05715.1-2"/>
    <property type="match status" value="1"/>
</dbReference>
<dbReference type="NCBIfam" id="NF004322">
    <property type="entry name" value="PRK05715.1-4"/>
    <property type="match status" value="1"/>
</dbReference>
<dbReference type="PANTHER" id="PTHR11434:SF16">
    <property type="entry name" value="NADH-UBIQUINONE OXIDOREDUCTASE CHAIN 4L"/>
    <property type="match status" value="1"/>
</dbReference>
<dbReference type="PANTHER" id="PTHR11434">
    <property type="entry name" value="NADH-UBIQUINONE OXIDOREDUCTASE SUBUNIT ND4L"/>
    <property type="match status" value="1"/>
</dbReference>
<dbReference type="Pfam" id="PF00420">
    <property type="entry name" value="Oxidored_q2"/>
    <property type="match status" value="1"/>
</dbReference>
<sequence length="101" mass="11277">MLLEHVLVLSAYLFSIGIYGLITSRNMVRALMCLELILNAVNMNFVTFSDFFDKRQLKGDIFSIFVIAIAAAEAAIGSAIVSSIYRNRKSTRINQSTLLNK</sequence>